<name>MSRA_BRUA4</name>
<evidence type="ECO:0000255" key="1">
    <source>
        <dbReference type="HAMAP-Rule" id="MF_01401"/>
    </source>
</evidence>
<evidence type="ECO:0000256" key="2">
    <source>
        <dbReference type="SAM" id="MobiDB-lite"/>
    </source>
</evidence>
<gene>
    <name evidence="1" type="primary">msrA</name>
    <name type="ordered locus">Oant_1312</name>
</gene>
<sequence length="218" mass="24158">MSFLDSYRKKTQMPSTDEALPGRAQPIPTSTTHFVNGRPLKGPWPEGYKQVLFGMGCFWGAERLFWQVPGVYVTAVGYAGGVTPNPTYEETCTGLTGHAEVVLVVYDPKVVSLDELLTLFWEEHDPTQGMRQGNDIGTTYRSVIYTFDKTDRDVAEKSREAYSQALAGRGLGPITTEIEDAPELYYAEDYHQQYLAKNPNGYCGLRGTGVSCPIPLAQ</sequence>
<protein>
    <recommendedName>
        <fullName evidence="1">Peptide methionine sulfoxide reductase MsrA</fullName>
        <shortName evidence="1">Protein-methionine-S-oxide reductase</shortName>
        <ecNumber evidence="1">1.8.4.11</ecNumber>
    </recommendedName>
    <alternativeName>
        <fullName evidence="1">Peptide-methionine (S)-S-oxide reductase</fullName>
        <shortName evidence="1">Peptide Met(O) reductase</shortName>
    </alternativeName>
</protein>
<proteinExistence type="inferred from homology"/>
<comment type="function">
    <text evidence="1">Has an important function as a repair enzyme for proteins that have been inactivated by oxidation. Catalyzes the reversible oxidation-reduction of methionine sulfoxide in proteins to methionine.</text>
</comment>
<comment type="catalytic activity">
    <reaction evidence="1">
        <text>L-methionyl-[protein] + [thioredoxin]-disulfide + H2O = L-methionyl-(S)-S-oxide-[protein] + [thioredoxin]-dithiol</text>
        <dbReference type="Rhea" id="RHEA:14217"/>
        <dbReference type="Rhea" id="RHEA-COMP:10698"/>
        <dbReference type="Rhea" id="RHEA-COMP:10700"/>
        <dbReference type="Rhea" id="RHEA-COMP:12313"/>
        <dbReference type="Rhea" id="RHEA-COMP:12315"/>
        <dbReference type="ChEBI" id="CHEBI:15377"/>
        <dbReference type="ChEBI" id="CHEBI:16044"/>
        <dbReference type="ChEBI" id="CHEBI:29950"/>
        <dbReference type="ChEBI" id="CHEBI:44120"/>
        <dbReference type="ChEBI" id="CHEBI:50058"/>
        <dbReference type="EC" id="1.8.4.11"/>
    </reaction>
</comment>
<comment type="catalytic activity">
    <reaction evidence="1">
        <text>[thioredoxin]-disulfide + L-methionine + H2O = L-methionine (S)-S-oxide + [thioredoxin]-dithiol</text>
        <dbReference type="Rhea" id="RHEA:19993"/>
        <dbReference type="Rhea" id="RHEA-COMP:10698"/>
        <dbReference type="Rhea" id="RHEA-COMP:10700"/>
        <dbReference type="ChEBI" id="CHEBI:15377"/>
        <dbReference type="ChEBI" id="CHEBI:29950"/>
        <dbReference type="ChEBI" id="CHEBI:50058"/>
        <dbReference type="ChEBI" id="CHEBI:57844"/>
        <dbReference type="ChEBI" id="CHEBI:58772"/>
        <dbReference type="EC" id="1.8.4.11"/>
    </reaction>
</comment>
<comment type="similarity">
    <text evidence="1">Belongs to the MsrA Met sulfoxide reductase family.</text>
</comment>
<accession>A6WYH5</accession>
<dbReference type="EC" id="1.8.4.11" evidence="1"/>
<dbReference type="EMBL" id="CP000758">
    <property type="protein sequence ID" value="ABS14029.1"/>
    <property type="molecule type" value="Genomic_DNA"/>
</dbReference>
<dbReference type="RefSeq" id="WP_012091416.1">
    <property type="nucleotide sequence ID" value="NC_009667.1"/>
</dbReference>
<dbReference type="SMR" id="A6WYH5"/>
<dbReference type="STRING" id="439375.Oant_1312"/>
<dbReference type="KEGG" id="oan:Oant_1312"/>
<dbReference type="PATRIC" id="fig|439375.7.peg.1372"/>
<dbReference type="eggNOG" id="COG0225">
    <property type="taxonomic scope" value="Bacteria"/>
</dbReference>
<dbReference type="HOGENOM" id="CLU_031040_10_3_5"/>
<dbReference type="PhylomeDB" id="A6WYH5"/>
<dbReference type="Proteomes" id="UP000002301">
    <property type="component" value="Chromosome 1"/>
</dbReference>
<dbReference type="GO" id="GO:0005737">
    <property type="term" value="C:cytoplasm"/>
    <property type="evidence" value="ECO:0007669"/>
    <property type="project" value="TreeGrafter"/>
</dbReference>
<dbReference type="GO" id="GO:0036456">
    <property type="term" value="F:L-methionine-(S)-S-oxide reductase activity"/>
    <property type="evidence" value="ECO:0007669"/>
    <property type="project" value="TreeGrafter"/>
</dbReference>
<dbReference type="GO" id="GO:0008113">
    <property type="term" value="F:peptide-methionine (S)-S-oxide reductase activity"/>
    <property type="evidence" value="ECO:0007669"/>
    <property type="project" value="UniProtKB-UniRule"/>
</dbReference>
<dbReference type="GO" id="GO:0034599">
    <property type="term" value="P:cellular response to oxidative stress"/>
    <property type="evidence" value="ECO:0007669"/>
    <property type="project" value="TreeGrafter"/>
</dbReference>
<dbReference type="GO" id="GO:0036211">
    <property type="term" value="P:protein modification process"/>
    <property type="evidence" value="ECO:0007669"/>
    <property type="project" value="UniProtKB-UniRule"/>
</dbReference>
<dbReference type="FunFam" id="3.30.1060.10:FF:000001">
    <property type="entry name" value="Peptide methionine sulfoxide reductase MsrA"/>
    <property type="match status" value="1"/>
</dbReference>
<dbReference type="Gene3D" id="3.30.1060.10">
    <property type="entry name" value="Peptide methionine sulphoxide reductase MsrA"/>
    <property type="match status" value="1"/>
</dbReference>
<dbReference type="HAMAP" id="MF_01401">
    <property type="entry name" value="MsrA"/>
    <property type="match status" value="1"/>
</dbReference>
<dbReference type="InterPro" id="IPR002569">
    <property type="entry name" value="Met_Sox_Rdtase_MsrA_dom"/>
</dbReference>
<dbReference type="InterPro" id="IPR036509">
    <property type="entry name" value="Met_Sox_Rdtase_MsrA_sf"/>
</dbReference>
<dbReference type="InterPro" id="IPR050162">
    <property type="entry name" value="MsrA_MetSO_reductase"/>
</dbReference>
<dbReference type="NCBIfam" id="TIGR00401">
    <property type="entry name" value="msrA"/>
    <property type="match status" value="1"/>
</dbReference>
<dbReference type="PANTHER" id="PTHR42799">
    <property type="entry name" value="MITOCHONDRIAL PEPTIDE METHIONINE SULFOXIDE REDUCTASE"/>
    <property type="match status" value="1"/>
</dbReference>
<dbReference type="PANTHER" id="PTHR42799:SF2">
    <property type="entry name" value="MITOCHONDRIAL PEPTIDE METHIONINE SULFOXIDE REDUCTASE"/>
    <property type="match status" value="1"/>
</dbReference>
<dbReference type="Pfam" id="PF01625">
    <property type="entry name" value="PMSR"/>
    <property type="match status" value="1"/>
</dbReference>
<dbReference type="SUPFAM" id="SSF55068">
    <property type="entry name" value="Peptide methionine sulfoxide reductase"/>
    <property type="match status" value="1"/>
</dbReference>
<feature type="chain" id="PRO_1000068347" description="Peptide methionine sulfoxide reductase MsrA">
    <location>
        <begin position="1"/>
        <end position="218"/>
    </location>
</feature>
<feature type="region of interest" description="Disordered" evidence="2">
    <location>
        <begin position="1"/>
        <end position="28"/>
    </location>
</feature>
<feature type="active site" evidence="1">
    <location>
        <position position="57"/>
    </location>
</feature>
<reference key="1">
    <citation type="journal article" date="2011" name="J. Bacteriol.">
        <title>Genome of Ochrobactrum anthropi ATCC 49188 T, a versatile opportunistic pathogen and symbiont of several eukaryotic hosts.</title>
        <authorList>
            <person name="Chain P.S."/>
            <person name="Lang D.M."/>
            <person name="Comerci D.J."/>
            <person name="Malfatti S.A."/>
            <person name="Vergez L.M."/>
            <person name="Shin M."/>
            <person name="Ugalde R.A."/>
            <person name="Garcia E."/>
            <person name="Tolmasky M.E."/>
        </authorList>
    </citation>
    <scope>NUCLEOTIDE SEQUENCE [LARGE SCALE GENOMIC DNA]</scope>
    <source>
        <strain>ATCC 49188 / DSM 6882 / CCUG 24695 / JCM 21032 / LMG 3331 / NBRC 15819 / NCTC 12168 / Alc 37</strain>
    </source>
</reference>
<keyword id="KW-0560">Oxidoreductase</keyword>
<keyword id="KW-1185">Reference proteome</keyword>
<organism>
    <name type="scientific">Brucella anthropi (strain ATCC 49188 / DSM 6882 / CCUG 24695 / JCM 21032 / LMG 3331 / NBRC 15819 / NCTC 12168 / Alc 37)</name>
    <name type="common">Ochrobactrum anthropi</name>
    <dbReference type="NCBI Taxonomy" id="439375"/>
    <lineage>
        <taxon>Bacteria</taxon>
        <taxon>Pseudomonadati</taxon>
        <taxon>Pseudomonadota</taxon>
        <taxon>Alphaproteobacteria</taxon>
        <taxon>Hyphomicrobiales</taxon>
        <taxon>Brucellaceae</taxon>
        <taxon>Brucella/Ochrobactrum group</taxon>
        <taxon>Brucella</taxon>
    </lineage>
</organism>